<dbReference type="EC" id="2.8.1.4" evidence="1"/>
<dbReference type="EMBL" id="CP000056">
    <property type="protein sequence ID" value="AAX71725.1"/>
    <property type="molecule type" value="Genomic_DNA"/>
</dbReference>
<dbReference type="RefSeq" id="WP_002990251.1">
    <property type="nucleotide sequence ID" value="NC_007296.2"/>
</dbReference>
<dbReference type="SMR" id="Q48U81"/>
<dbReference type="KEGG" id="spb:M28_Spy0611"/>
<dbReference type="HOGENOM" id="CLU_037952_4_0_9"/>
<dbReference type="UniPathway" id="UPA00060"/>
<dbReference type="GO" id="GO:0005829">
    <property type="term" value="C:cytosol"/>
    <property type="evidence" value="ECO:0007669"/>
    <property type="project" value="TreeGrafter"/>
</dbReference>
<dbReference type="GO" id="GO:0005524">
    <property type="term" value="F:ATP binding"/>
    <property type="evidence" value="ECO:0007669"/>
    <property type="project" value="UniProtKB-UniRule"/>
</dbReference>
<dbReference type="GO" id="GO:0004810">
    <property type="term" value="F:CCA tRNA nucleotidyltransferase activity"/>
    <property type="evidence" value="ECO:0007669"/>
    <property type="project" value="InterPro"/>
</dbReference>
<dbReference type="GO" id="GO:0000049">
    <property type="term" value="F:tRNA binding"/>
    <property type="evidence" value="ECO:0007669"/>
    <property type="project" value="UniProtKB-UniRule"/>
</dbReference>
<dbReference type="GO" id="GO:0140741">
    <property type="term" value="F:tRNA-uracil-4 sulfurtransferase activity"/>
    <property type="evidence" value="ECO:0007669"/>
    <property type="project" value="UniProtKB-EC"/>
</dbReference>
<dbReference type="GO" id="GO:0009228">
    <property type="term" value="P:thiamine biosynthetic process"/>
    <property type="evidence" value="ECO:0007669"/>
    <property type="project" value="UniProtKB-KW"/>
</dbReference>
<dbReference type="GO" id="GO:0009229">
    <property type="term" value="P:thiamine diphosphate biosynthetic process"/>
    <property type="evidence" value="ECO:0007669"/>
    <property type="project" value="UniProtKB-UniRule"/>
</dbReference>
<dbReference type="GO" id="GO:0052837">
    <property type="term" value="P:thiazole biosynthetic process"/>
    <property type="evidence" value="ECO:0007669"/>
    <property type="project" value="TreeGrafter"/>
</dbReference>
<dbReference type="GO" id="GO:0002937">
    <property type="term" value="P:tRNA 4-thiouridine biosynthesis"/>
    <property type="evidence" value="ECO:0007669"/>
    <property type="project" value="TreeGrafter"/>
</dbReference>
<dbReference type="CDD" id="cd01712">
    <property type="entry name" value="PPase_ThiI"/>
    <property type="match status" value="1"/>
</dbReference>
<dbReference type="CDD" id="cd11716">
    <property type="entry name" value="THUMP_ThiI"/>
    <property type="match status" value="1"/>
</dbReference>
<dbReference type="FunFam" id="3.40.50.620:FF:000053">
    <property type="entry name" value="Probable tRNA sulfurtransferase"/>
    <property type="match status" value="1"/>
</dbReference>
<dbReference type="Gene3D" id="3.30.2130.30">
    <property type="match status" value="1"/>
</dbReference>
<dbReference type="Gene3D" id="3.40.50.620">
    <property type="entry name" value="HUPs"/>
    <property type="match status" value="1"/>
</dbReference>
<dbReference type="HAMAP" id="MF_00021">
    <property type="entry name" value="ThiI"/>
    <property type="match status" value="1"/>
</dbReference>
<dbReference type="InterPro" id="IPR014729">
    <property type="entry name" value="Rossmann-like_a/b/a_fold"/>
</dbReference>
<dbReference type="InterPro" id="IPR020536">
    <property type="entry name" value="ThiI_AANH"/>
</dbReference>
<dbReference type="InterPro" id="IPR054173">
    <property type="entry name" value="ThiI_fer"/>
</dbReference>
<dbReference type="InterPro" id="IPR049961">
    <property type="entry name" value="ThiI_N"/>
</dbReference>
<dbReference type="InterPro" id="IPR004114">
    <property type="entry name" value="THUMP_dom"/>
</dbReference>
<dbReference type="InterPro" id="IPR049962">
    <property type="entry name" value="THUMP_ThiI"/>
</dbReference>
<dbReference type="InterPro" id="IPR003720">
    <property type="entry name" value="tRNA_STrfase"/>
</dbReference>
<dbReference type="InterPro" id="IPR050102">
    <property type="entry name" value="tRNA_sulfurtransferase_ThiI"/>
</dbReference>
<dbReference type="NCBIfam" id="TIGR00342">
    <property type="entry name" value="tRNA uracil 4-sulfurtransferase ThiI"/>
    <property type="match status" value="1"/>
</dbReference>
<dbReference type="PANTHER" id="PTHR43209">
    <property type="entry name" value="TRNA SULFURTRANSFERASE"/>
    <property type="match status" value="1"/>
</dbReference>
<dbReference type="PANTHER" id="PTHR43209:SF1">
    <property type="entry name" value="TRNA SULFURTRANSFERASE"/>
    <property type="match status" value="1"/>
</dbReference>
<dbReference type="Pfam" id="PF02568">
    <property type="entry name" value="ThiI"/>
    <property type="match status" value="1"/>
</dbReference>
<dbReference type="Pfam" id="PF22025">
    <property type="entry name" value="ThiI_fer"/>
    <property type="match status" value="1"/>
</dbReference>
<dbReference type="Pfam" id="PF02926">
    <property type="entry name" value="THUMP"/>
    <property type="match status" value="1"/>
</dbReference>
<dbReference type="SMART" id="SM00981">
    <property type="entry name" value="THUMP"/>
    <property type="match status" value="1"/>
</dbReference>
<dbReference type="SUPFAM" id="SSF52402">
    <property type="entry name" value="Adenine nucleotide alpha hydrolases-like"/>
    <property type="match status" value="1"/>
</dbReference>
<dbReference type="SUPFAM" id="SSF143437">
    <property type="entry name" value="THUMP domain-like"/>
    <property type="match status" value="1"/>
</dbReference>
<dbReference type="PROSITE" id="PS51165">
    <property type="entry name" value="THUMP"/>
    <property type="match status" value="1"/>
</dbReference>
<comment type="function">
    <text evidence="1">Catalyzes the ATP-dependent transfer of a sulfur to tRNA to produce 4-thiouridine in position 8 of tRNAs, which functions as a near-UV photosensor. Also catalyzes the transfer of sulfur to the sulfur carrier protein ThiS, forming ThiS-thiocarboxylate. This is a step in the synthesis of thiazole, in the thiamine biosynthesis pathway. The sulfur is donated as persulfide by IscS.</text>
</comment>
<comment type="catalytic activity">
    <reaction evidence="1">
        <text>[ThiI sulfur-carrier protein]-S-sulfanyl-L-cysteine + a uridine in tRNA + 2 reduced [2Fe-2S]-[ferredoxin] + ATP + H(+) = [ThiI sulfur-carrier protein]-L-cysteine + a 4-thiouridine in tRNA + 2 oxidized [2Fe-2S]-[ferredoxin] + AMP + diphosphate</text>
        <dbReference type="Rhea" id="RHEA:24176"/>
        <dbReference type="Rhea" id="RHEA-COMP:10000"/>
        <dbReference type="Rhea" id="RHEA-COMP:10001"/>
        <dbReference type="Rhea" id="RHEA-COMP:13337"/>
        <dbReference type="Rhea" id="RHEA-COMP:13338"/>
        <dbReference type="Rhea" id="RHEA-COMP:13339"/>
        <dbReference type="Rhea" id="RHEA-COMP:13340"/>
        <dbReference type="ChEBI" id="CHEBI:15378"/>
        <dbReference type="ChEBI" id="CHEBI:29950"/>
        <dbReference type="ChEBI" id="CHEBI:30616"/>
        <dbReference type="ChEBI" id="CHEBI:33019"/>
        <dbReference type="ChEBI" id="CHEBI:33737"/>
        <dbReference type="ChEBI" id="CHEBI:33738"/>
        <dbReference type="ChEBI" id="CHEBI:61963"/>
        <dbReference type="ChEBI" id="CHEBI:65315"/>
        <dbReference type="ChEBI" id="CHEBI:136798"/>
        <dbReference type="ChEBI" id="CHEBI:456215"/>
        <dbReference type="EC" id="2.8.1.4"/>
    </reaction>
</comment>
<comment type="catalytic activity">
    <reaction evidence="1">
        <text>[ThiS sulfur-carrier protein]-C-terminal Gly-Gly-AMP + S-sulfanyl-L-cysteinyl-[cysteine desulfurase] + AH2 = [ThiS sulfur-carrier protein]-C-terminal-Gly-aminoethanethioate + L-cysteinyl-[cysteine desulfurase] + A + AMP + 2 H(+)</text>
        <dbReference type="Rhea" id="RHEA:43340"/>
        <dbReference type="Rhea" id="RHEA-COMP:12157"/>
        <dbReference type="Rhea" id="RHEA-COMP:12158"/>
        <dbReference type="Rhea" id="RHEA-COMP:12910"/>
        <dbReference type="Rhea" id="RHEA-COMP:19908"/>
        <dbReference type="ChEBI" id="CHEBI:13193"/>
        <dbReference type="ChEBI" id="CHEBI:15378"/>
        <dbReference type="ChEBI" id="CHEBI:17499"/>
        <dbReference type="ChEBI" id="CHEBI:29950"/>
        <dbReference type="ChEBI" id="CHEBI:61963"/>
        <dbReference type="ChEBI" id="CHEBI:90618"/>
        <dbReference type="ChEBI" id="CHEBI:232372"/>
        <dbReference type="ChEBI" id="CHEBI:456215"/>
    </reaction>
</comment>
<comment type="pathway">
    <text evidence="1">Cofactor biosynthesis; thiamine diphosphate biosynthesis.</text>
</comment>
<comment type="subcellular location">
    <subcellularLocation>
        <location evidence="1">Cytoplasm</location>
    </subcellularLocation>
</comment>
<comment type="similarity">
    <text evidence="1">Belongs to the ThiI family.</text>
</comment>
<protein>
    <recommendedName>
        <fullName evidence="1">Probable tRNA sulfurtransferase</fullName>
        <ecNumber evidence="1">2.8.1.4</ecNumber>
    </recommendedName>
    <alternativeName>
        <fullName evidence="1">Sulfur carrier protein ThiS sulfurtransferase</fullName>
    </alternativeName>
    <alternativeName>
        <fullName evidence="1">Thiamine biosynthesis protein ThiI</fullName>
    </alternativeName>
    <alternativeName>
        <fullName evidence="1">tRNA 4-thiouridine synthase</fullName>
    </alternativeName>
</protein>
<feature type="chain" id="PRO_1000074300" description="Probable tRNA sulfurtransferase">
    <location>
        <begin position="1"/>
        <end position="404"/>
    </location>
</feature>
<feature type="domain" description="THUMP" evidence="1">
    <location>
        <begin position="60"/>
        <end position="165"/>
    </location>
</feature>
<feature type="binding site" evidence="1">
    <location>
        <begin position="183"/>
        <end position="184"/>
    </location>
    <ligand>
        <name>ATP</name>
        <dbReference type="ChEBI" id="CHEBI:30616"/>
    </ligand>
</feature>
<feature type="binding site" evidence="1">
    <location>
        <begin position="208"/>
        <end position="209"/>
    </location>
    <ligand>
        <name>ATP</name>
        <dbReference type="ChEBI" id="CHEBI:30616"/>
    </ligand>
</feature>
<feature type="binding site" evidence="1">
    <location>
        <position position="265"/>
    </location>
    <ligand>
        <name>ATP</name>
        <dbReference type="ChEBI" id="CHEBI:30616"/>
    </ligand>
</feature>
<feature type="binding site" evidence="1">
    <location>
        <position position="287"/>
    </location>
    <ligand>
        <name>ATP</name>
        <dbReference type="ChEBI" id="CHEBI:30616"/>
    </ligand>
</feature>
<feature type="binding site" evidence="1">
    <location>
        <position position="296"/>
    </location>
    <ligand>
        <name>ATP</name>
        <dbReference type="ChEBI" id="CHEBI:30616"/>
    </ligand>
</feature>
<sequence length="404" mass="44754">MDYSEIMVRHGELSTKGKNRMRFINKLKNNIQDVLAPFPAIAVRSDRDRTHVSLNGTDYQPIVEALKLVFGVQALSPVYKLEKSVPLLVTAVQDIMTSLYRDGLTFKIATKRSDHAFELDSRELNSLLGGAVFEVLPNIQAQMKHPDVTLKVEIRDEAAYISYEEIKGAGGLPVGTSGKGMLMLSGGIDSPVAGYLALKRGLDIEVVHFASPPYTSPGALAKAQDLTRRLTRFGGNIQFIEVPFTEIQEEIKNKAPEAYLMTLTRRFMMRITDAIREQRKGLVIVNGESLGQVASQTLESMQAINAVTSTPIIRPVVTMDKLEIIEMAQAIDTFDISIQPFEDCCTIFAPDRPKTNPKLGNAEKYEERFDIDGLVQRAVSGIVVTEITPEIVNDEVENLIDALL</sequence>
<name>THII_STRPM</name>
<reference key="1">
    <citation type="journal article" date="2005" name="J. Infect. Dis.">
        <title>Genome sequence of a serotype M28 strain of group A Streptococcus: potential new insights into puerperal sepsis and bacterial disease specificity.</title>
        <authorList>
            <person name="Green N.M."/>
            <person name="Zhang S."/>
            <person name="Porcella S.F."/>
            <person name="Nagiec M.J."/>
            <person name="Barbian K.D."/>
            <person name="Beres S.B."/>
            <person name="Lefebvre R.B."/>
            <person name="Musser J.M."/>
        </authorList>
    </citation>
    <scope>NUCLEOTIDE SEQUENCE [LARGE SCALE GENOMIC DNA]</scope>
    <source>
        <strain>MGAS6180</strain>
    </source>
</reference>
<accession>Q48U81</accession>
<keyword id="KW-0067">ATP-binding</keyword>
<keyword id="KW-0963">Cytoplasm</keyword>
<keyword id="KW-0547">Nucleotide-binding</keyword>
<keyword id="KW-0694">RNA-binding</keyword>
<keyword id="KW-0784">Thiamine biosynthesis</keyword>
<keyword id="KW-0808">Transferase</keyword>
<keyword id="KW-0820">tRNA-binding</keyword>
<proteinExistence type="inferred from homology"/>
<organism>
    <name type="scientific">Streptococcus pyogenes serotype M28 (strain MGAS6180)</name>
    <dbReference type="NCBI Taxonomy" id="319701"/>
    <lineage>
        <taxon>Bacteria</taxon>
        <taxon>Bacillati</taxon>
        <taxon>Bacillota</taxon>
        <taxon>Bacilli</taxon>
        <taxon>Lactobacillales</taxon>
        <taxon>Streptococcaceae</taxon>
        <taxon>Streptococcus</taxon>
    </lineage>
</organism>
<gene>
    <name evidence="1" type="primary">thiI</name>
    <name type="ordered locus">M28_Spy0611</name>
</gene>
<evidence type="ECO:0000255" key="1">
    <source>
        <dbReference type="HAMAP-Rule" id="MF_00021"/>
    </source>
</evidence>